<comment type="function">
    <text evidence="3">Component of the SRP (signal recognition particle) receptor (SR). Ensures, in conjunction with the signal recognition particle, the correct targeting of the nascent secretory proteins to the endoplasmic reticulum membrane system. GTP hydrolysis may enhance the fidelity of and provide unidirectionality to the targeting reaction (By similarity).</text>
</comment>
<comment type="subunit">
    <text evidence="3">Heterodimer of an alpha and a beta chain.</text>
</comment>
<comment type="subcellular location">
    <subcellularLocation>
        <location evidence="3">Endoplasmic reticulum membrane</location>
        <topology evidence="3">Peripheral membrane protein</topology>
        <orientation evidence="3">Cytoplasmic side</orientation>
    </subcellularLocation>
    <text evidence="3">Thought to be anchored in the membrane through an interaction with SR-beta, which contains a bona fide transmembrane domain.</text>
</comment>
<comment type="domain">
    <text evidence="2">The NG domain, also named G domain, is a special guanosine triphosphatase (GTPase) domain, which forms a guanosine 5'-triphosphate (GTP)-dependent complex with a homologous NG domain in the signal recognition particle (SRP) complex subunit SRP54 (By similarity). The two NG domains undergo cooperative rearrangements upon their assembly, which culminate in the reciprocal activation of the GTPase activity of one another (By similarity). GTPase induced rearrangement of SR drives SRP-mediated cotranslational protein translocation into the ER (By similarity).</text>
</comment>
<comment type="similarity">
    <text evidence="5">Belongs to the GTP-binding SRP family.</text>
</comment>
<sequence>MIDLFAIVNKGGIVLWKKTNSLVNLKCLQVLFHEAFLSEQRTVNNTVTFDRYTMQYQEATQYSIVFVVVFQDLKCMAYSQSLLNSAHNIFLNLFKEKLEDRQVPNEAEVEKLFAPIFNRKSAQLENETDTKSLPVEANNDNSARKKNEYEMKKKGAQSKQTNAPKKGKKQLRKWDDQITEEEQAALNYSSQASSASQTVDNSQLSSIVGNNNKFQKTGSGDVIISDLEMDPNQTISNKSASSAFSLFSNLIGGKYLKEEDLSPILKQMQEHLTKKNVANSIALELCESVKASLINKKVGSFDTVKNTVNKAFRDRLTQILTPSTSLDLLHSIRSVRKNENRPYTISLIGVNGVGKSTTLAKIAYWLLSNNFRILVAACDTFRSGAIEQLGVHVKNLQSLKGSSIELFAQGYGKDSSFVVKNAVEYAKQNSFDVILIDTAGRRHNDQRLMGSLEKFTKATKLDKIFQVAEALVGTDSLAQAKHFQASLYHRPLDGFIISKVDTVGQLVGVMVGMVYAVRVPIIFVGIGQTYSDLRTLSVDWVVDQLMK</sequence>
<dbReference type="EMBL" id="CU329671">
    <property type="protein sequence ID" value="CAA17783.1"/>
    <property type="molecule type" value="Genomic_DNA"/>
</dbReference>
<dbReference type="PIR" id="T40342">
    <property type="entry name" value="T40342"/>
</dbReference>
<dbReference type="RefSeq" id="NP_596660.1">
    <property type="nucleotide sequence ID" value="NM_001022582.2"/>
</dbReference>
<dbReference type="SMR" id="O43032"/>
<dbReference type="FunCoup" id="O43032">
    <property type="interactions" value="364"/>
</dbReference>
<dbReference type="STRING" id="284812.O43032"/>
<dbReference type="iPTMnet" id="O43032"/>
<dbReference type="PaxDb" id="4896-SPBC3B9.03.1"/>
<dbReference type="EnsemblFungi" id="SPBC3B9.03.1">
    <property type="protein sequence ID" value="SPBC3B9.03.1:pep"/>
    <property type="gene ID" value="SPBC3B9.03"/>
</dbReference>
<dbReference type="GeneID" id="2540909"/>
<dbReference type="KEGG" id="spo:2540909"/>
<dbReference type="PomBase" id="SPBC3B9.03">
    <property type="gene designation" value="srp101"/>
</dbReference>
<dbReference type="VEuPathDB" id="FungiDB:SPBC3B9.03"/>
<dbReference type="eggNOG" id="KOG0781">
    <property type="taxonomic scope" value="Eukaryota"/>
</dbReference>
<dbReference type="HOGENOM" id="CLU_009301_8_1_1"/>
<dbReference type="InParanoid" id="O43032"/>
<dbReference type="OMA" id="MVNMVYA"/>
<dbReference type="PhylomeDB" id="O43032"/>
<dbReference type="PRO" id="PR:O43032"/>
<dbReference type="Proteomes" id="UP000002485">
    <property type="component" value="Chromosome II"/>
</dbReference>
<dbReference type="GO" id="GO:0005829">
    <property type="term" value="C:cytosol"/>
    <property type="evidence" value="ECO:0007005"/>
    <property type="project" value="PomBase"/>
</dbReference>
<dbReference type="GO" id="GO:0005789">
    <property type="term" value="C:endoplasmic reticulum membrane"/>
    <property type="evidence" value="ECO:0000318"/>
    <property type="project" value="GO_Central"/>
</dbReference>
<dbReference type="GO" id="GO:0005634">
    <property type="term" value="C:nucleus"/>
    <property type="evidence" value="ECO:0007005"/>
    <property type="project" value="PomBase"/>
</dbReference>
<dbReference type="GO" id="GO:0005785">
    <property type="term" value="C:signal recognition particle receptor complex"/>
    <property type="evidence" value="ECO:0000266"/>
    <property type="project" value="PomBase"/>
</dbReference>
<dbReference type="GO" id="GO:0016887">
    <property type="term" value="F:ATP hydrolysis activity"/>
    <property type="evidence" value="ECO:0007669"/>
    <property type="project" value="InterPro"/>
</dbReference>
<dbReference type="GO" id="GO:0005525">
    <property type="term" value="F:GTP binding"/>
    <property type="evidence" value="ECO:0000255"/>
    <property type="project" value="PomBase"/>
</dbReference>
<dbReference type="GO" id="GO:0003924">
    <property type="term" value="F:GTPase activity"/>
    <property type="evidence" value="ECO:0000318"/>
    <property type="project" value="GO_Central"/>
</dbReference>
<dbReference type="GO" id="GO:0005047">
    <property type="term" value="F:signal recognition particle binding"/>
    <property type="evidence" value="ECO:0000318"/>
    <property type="project" value="GO_Central"/>
</dbReference>
<dbReference type="GO" id="GO:0006886">
    <property type="term" value="P:intracellular protein transport"/>
    <property type="evidence" value="ECO:0000303"/>
    <property type="project" value="PomBase"/>
</dbReference>
<dbReference type="GO" id="GO:0045047">
    <property type="term" value="P:protein targeting to ER"/>
    <property type="evidence" value="ECO:0000318"/>
    <property type="project" value="GO_Central"/>
</dbReference>
<dbReference type="GO" id="GO:0006614">
    <property type="term" value="P:SRP-dependent cotranslational protein targeting to membrane"/>
    <property type="evidence" value="ECO:0000266"/>
    <property type="project" value="PomBase"/>
</dbReference>
<dbReference type="CDD" id="cd14826">
    <property type="entry name" value="SR_alpha_SRX"/>
    <property type="match status" value="1"/>
</dbReference>
<dbReference type="FunFam" id="3.40.50.300:FF:000566">
    <property type="entry name" value="Signal recognition particle receptor subunit alpha"/>
    <property type="match status" value="1"/>
</dbReference>
<dbReference type="FunFam" id="1.20.120.140:FF:000009">
    <property type="entry name" value="Signal sequence receptor alpha subunit"/>
    <property type="match status" value="1"/>
</dbReference>
<dbReference type="Gene3D" id="3.30.450.60">
    <property type="match status" value="1"/>
</dbReference>
<dbReference type="Gene3D" id="3.40.50.300">
    <property type="entry name" value="P-loop containing nucleotide triphosphate hydrolases"/>
    <property type="match status" value="1"/>
</dbReference>
<dbReference type="Gene3D" id="1.20.120.140">
    <property type="entry name" value="Signal recognition particle SRP54, nucleotide-binding domain"/>
    <property type="match status" value="1"/>
</dbReference>
<dbReference type="InterPro" id="IPR003593">
    <property type="entry name" value="AAA+_ATPase"/>
</dbReference>
<dbReference type="InterPro" id="IPR011012">
    <property type="entry name" value="Longin-like_dom_sf"/>
</dbReference>
<dbReference type="InterPro" id="IPR027417">
    <property type="entry name" value="P-loop_NTPase"/>
</dbReference>
<dbReference type="InterPro" id="IPR007222">
    <property type="entry name" value="Sig_recog_particle_rcpt_asu_N"/>
</dbReference>
<dbReference type="InterPro" id="IPR013822">
    <property type="entry name" value="Signal_recog_particl_SRP54_hlx"/>
</dbReference>
<dbReference type="InterPro" id="IPR036225">
    <property type="entry name" value="SRP/SRP_N"/>
</dbReference>
<dbReference type="InterPro" id="IPR000897">
    <property type="entry name" value="SRP54_GTPase_dom"/>
</dbReference>
<dbReference type="InterPro" id="IPR042101">
    <property type="entry name" value="SRP54_N_sf"/>
</dbReference>
<dbReference type="PANTHER" id="PTHR43134">
    <property type="entry name" value="SIGNAL RECOGNITION PARTICLE RECEPTOR SUBUNIT ALPHA"/>
    <property type="match status" value="1"/>
</dbReference>
<dbReference type="PANTHER" id="PTHR43134:SF1">
    <property type="entry name" value="SIGNAL RECOGNITION PARTICLE RECEPTOR SUBUNIT ALPHA"/>
    <property type="match status" value="1"/>
</dbReference>
<dbReference type="Pfam" id="PF04086">
    <property type="entry name" value="SRP-alpha_N"/>
    <property type="match status" value="1"/>
</dbReference>
<dbReference type="Pfam" id="PF00448">
    <property type="entry name" value="SRP54"/>
    <property type="match status" value="1"/>
</dbReference>
<dbReference type="Pfam" id="PF02881">
    <property type="entry name" value="SRP54_N"/>
    <property type="match status" value="1"/>
</dbReference>
<dbReference type="SMART" id="SM00382">
    <property type="entry name" value="AAA"/>
    <property type="match status" value="1"/>
</dbReference>
<dbReference type="SMART" id="SM00962">
    <property type="entry name" value="SRP54"/>
    <property type="match status" value="1"/>
</dbReference>
<dbReference type="SMART" id="SM00963">
    <property type="entry name" value="SRP54_N"/>
    <property type="match status" value="1"/>
</dbReference>
<dbReference type="SUPFAM" id="SSF47364">
    <property type="entry name" value="Domain of the SRP/SRP receptor G-proteins"/>
    <property type="match status" value="1"/>
</dbReference>
<dbReference type="SUPFAM" id="SSF52540">
    <property type="entry name" value="P-loop containing nucleoside triphosphate hydrolases"/>
    <property type="match status" value="1"/>
</dbReference>
<dbReference type="SUPFAM" id="SSF64356">
    <property type="entry name" value="SNARE-like"/>
    <property type="match status" value="1"/>
</dbReference>
<dbReference type="PROSITE" id="PS00300">
    <property type="entry name" value="SRP54"/>
    <property type="match status" value="1"/>
</dbReference>
<reference key="1">
    <citation type="journal article" date="2002" name="Nature">
        <title>The genome sequence of Schizosaccharomyces pombe.</title>
        <authorList>
            <person name="Wood V."/>
            <person name="Gwilliam R."/>
            <person name="Rajandream M.A."/>
            <person name="Lyne M.H."/>
            <person name="Lyne R."/>
            <person name="Stewart A."/>
            <person name="Sgouros J.G."/>
            <person name="Peat N."/>
            <person name="Hayles J."/>
            <person name="Baker S.G."/>
            <person name="Basham D."/>
            <person name="Bowman S."/>
            <person name="Brooks K."/>
            <person name="Brown D."/>
            <person name="Brown S."/>
            <person name="Chillingworth T."/>
            <person name="Churcher C.M."/>
            <person name="Collins M."/>
            <person name="Connor R."/>
            <person name="Cronin A."/>
            <person name="Davis P."/>
            <person name="Feltwell T."/>
            <person name="Fraser A."/>
            <person name="Gentles S."/>
            <person name="Goble A."/>
            <person name="Hamlin N."/>
            <person name="Harris D.E."/>
            <person name="Hidalgo J."/>
            <person name="Hodgson G."/>
            <person name="Holroyd S."/>
            <person name="Hornsby T."/>
            <person name="Howarth S."/>
            <person name="Huckle E.J."/>
            <person name="Hunt S."/>
            <person name="Jagels K."/>
            <person name="James K.D."/>
            <person name="Jones L."/>
            <person name="Jones M."/>
            <person name="Leather S."/>
            <person name="McDonald S."/>
            <person name="McLean J."/>
            <person name="Mooney P."/>
            <person name="Moule S."/>
            <person name="Mungall K.L."/>
            <person name="Murphy L.D."/>
            <person name="Niblett D."/>
            <person name="Odell C."/>
            <person name="Oliver K."/>
            <person name="O'Neil S."/>
            <person name="Pearson D."/>
            <person name="Quail M.A."/>
            <person name="Rabbinowitsch E."/>
            <person name="Rutherford K.M."/>
            <person name="Rutter S."/>
            <person name="Saunders D."/>
            <person name="Seeger K."/>
            <person name="Sharp S."/>
            <person name="Skelton J."/>
            <person name="Simmonds M.N."/>
            <person name="Squares R."/>
            <person name="Squares S."/>
            <person name="Stevens K."/>
            <person name="Taylor K."/>
            <person name="Taylor R.G."/>
            <person name="Tivey A."/>
            <person name="Walsh S.V."/>
            <person name="Warren T."/>
            <person name="Whitehead S."/>
            <person name="Woodward J.R."/>
            <person name="Volckaert G."/>
            <person name="Aert R."/>
            <person name="Robben J."/>
            <person name="Grymonprez B."/>
            <person name="Weltjens I."/>
            <person name="Vanstreels E."/>
            <person name="Rieger M."/>
            <person name="Schaefer M."/>
            <person name="Mueller-Auer S."/>
            <person name="Gabel C."/>
            <person name="Fuchs M."/>
            <person name="Duesterhoeft A."/>
            <person name="Fritzc C."/>
            <person name="Holzer E."/>
            <person name="Moestl D."/>
            <person name="Hilbert H."/>
            <person name="Borzym K."/>
            <person name="Langer I."/>
            <person name="Beck A."/>
            <person name="Lehrach H."/>
            <person name="Reinhardt R."/>
            <person name="Pohl T.M."/>
            <person name="Eger P."/>
            <person name="Zimmermann W."/>
            <person name="Wedler H."/>
            <person name="Wambutt R."/>
            <person name="Purnelle B."/>
            <person name="Goffeau A."/>
            <person name="Cadieu E."/>
            <person name="Dreano S."/>
            <person name="Gloux S."/>
            <person name="Lelaure V."/>
            <person name="Mottier S."/>
            <person name="Galibert F."/>
            <person name="Aves S.J."/>
            <person name="Xiang Z."/>
            <person name="Hunt C."/>
            <person name="Moore K."/>
            <person name="Hurst S.M."/>
            <person name="Lucas M."/>
            <person name="Rochet M."/>
            <person name="Gaillardin C."/>
            <person name="Tallada V.A."/>
            <person name="Garzon A."/>
            <person name="Thode G."/>
            <person name="Daga R.R."/>
            <person name="Cruzado L."/>
            <person name="Jimenez J."/>
            <person name="Sanchez M."/>
            <person name="del Rey F."/>
            <person name="Benito J."/>
            <person name="Dominguez A."/>
            <person name="Revuelta J.L."/>
            <person name="Moreno S."/>
            <person name="Armstrong J."/>
            <person name="Forsburg S.L."/>
            <person name="Cerutti L."/>
            <person name="Lowe T."/>
            <person name="McCombie W.R."/>
            <person name="Paulsen I."/>
            <person name="Potashkin J."/>
            <person name="Shpakovski G.V."/>
            <person name="Ussery D."/>
            <person name="Barrell B.G."/>
            <person name="Nurse P."/>
        </authorList>
    </citation>
    <scope>NUCLEOTIDE SEQUENCE [LARGE SCALE GENOMIC DNA]</scope>
    <source>
        <strain>972 / ATCC 24843</strain>
    </source>
</reference>
<evidence type="ECO:0000250" key="1"/>
<evidence type="ECO:0000250" key="2">
    <source>
        <dbReference type="UniProtKB" id="P08240"/>
    </source>
</evidence>
<evidence type="ECO:0000250" key="3">
    <source>
        <dbReference type="UniProtKB" id="P32916"/>
    </source>
</evidence>
<evidence type="ECO:0000256" key="4">
    <source>
        <dbReference type="SAM" id="MobiDB-lite"/>
    </source>
</evidence>
<evidence type="ECO:0000305" key="5"/>
<proteinExistence type="inferred from homology"/>
<organism>
    <name type="scientific">Schizosaccharomyces pombe (strain 972 / ATCC 24843)</name>
    <name type="common">Fission yeast</name>
    <dbReference type="NCBI Taxonomy" id="284812"/>
    <lineage>
        <taxon>Eukaryota</taxon>
        <taxon>Fungi</taxon>
        <taxon>Dikarya</taxon>
        <taxon>Ascomycota</taxon>
        <taxon>Taphrinomycotina</taxon>
        <taxon>Schizosaccharomycetes</taxon>
        <taxon>Schizosaccharomycetales</taxon>
        <taxon>Schizosaccharomycetaceae</taxon>
        <taxon>Schizosaccharomyces</taxon>
    </lineage>
</organism>
<feature type="chain" id="PRO_0000316024" description="Signal recognition particle receptor subunit alpha homolog">
    <location>
        <begin position="1"/>
        <end position="547"/>
    </location>
</feature>
<feature type="region of interest" description="Disordered" evidence="4">
    <location>
        <begin position="124"/>
        <end position="174"/>
    </location>
</feature>
<feature type="region of interest" description="NG domain" evidence="2">
    <location>
        <begin position="343"/>
        <end position="546"/>
    </location>
</feature>
<feature type="compositionally biased region" description="Basic and acidic residues" evidence="4">
    <location>
        <begin position="142"/>
        <end position="153"/>
    </location>
</feature>
<feature type="binding site" evidence="1">
    <location>
        <begin position="349"/>
        <end position="356"/>
    </location>
    <ligand>
        <name>GTP</name>
        <dbReference type="ChEBI" id="CHEBI:37565"/>
    </ligand>
</feature>
<feature type="binding site" evidence="1">
    <location>
        <begin position="437"/>
        <end position="441"/>
    </location>
    <ligand>
        <name>GTP</name>
        <dbReference type="ChEBI" id="CHEBI:37565"/>
    </ligand>
</feature>
<feature type="binding site" evidence="1">
    <location>
        <begin position="498"/>
        <end position="501"/>
    </location>
    <ligand>
        <name>GTP</name>
        <dbReference type="ChEBI" id="CHEBI:37565"/>
    </ligand>
</feature>
<protein>
    <recommendedName>
        <fullName>Signal recognition particle receptor subunit alpha homolog</fullName>
        <shortName>SR-alpha</shortName>
    </recommendedName>
    <alternativeName>
        <fullName>Docking protein alpha</fullName>
        <shortName>DP-alpha</shortName>
    </alternativeName>
</protein>
<gene>
    <name type="primary">srp101</name>
    <name type="ORF">SPBC3B9.03</name>
</gene>
<keyword id="KW-0256">Endoplasmic reticulum</keyword>
<keyword id="KW-0342">GTP-binding</keyword>
<keyword id="KW-0472">Membrane</keyword>
<keyword id="KW-0547">Nucleotide-binding</keyword>
<keyword id="KW-0675">Receptor</keyword>
<keyword id="KW-1185">Reference proteome</keyword>
<name>SRPR_SCHPO</name>
<accession>O43032</accession>